<name>GRP_ALLMI</name>
<proteinExistence type="evidence at protein level"/>
<dbReference type="GO" id="GO:0005615">
    <property type="term" value="C:extracellular space"/>
    <property type="evidence" value="ECO:0000250"/>
    <property type="project" value="UniProtKB"/>
</dbReference>
<dbReference type="GO" id="GO:0034774">
    <property type="term" value="C:secretory granule lumen"/>
    <property type="evidence" value="ECO:0000250"/>
    <property type="project" value="UniProtKB"/>
</dbReference>
<dbReference type="GO" id="GO:0007218">
    <property type="term" value="P:neuropeptide signaling pathway"/>
    <property type="evidence" value="ECO:0007669"/>
    <property type="project" value="InterPro"/>
</dbReference>
<dbReference type="GO" id="GO:0090277">
    <property type="term" value="P:positive regulation of peptide hormone secretion"/>
    <property type="evidence" value="ECO:0000250"/>
    <property type="project" value="UniProtKB"/>
</dbReference>
<dbReference type="GO" id="GO:1900738">
    <property type="term" value="P:positive regulation of phospholipase C-activating G protein-coupled receptor signaling pathway"/>
    <property type="evidence" value="ECO:0000250"/>
    <property type="project" value="UniProtKB"/>
</dbReference>
<dbReference type="InterPro" id="IPR000874">
    <property type="entry name" value="Bombesin"/>
</dbReference>
<dbReference type="Pfam" id="PF02044">
    <property type="entry name" value="Bombesin"/>
    <property type="match status" value="1"/>
</dbReference>
<dbReference type="PROSITE" id="PS00257">
    <property type="entry name" value="BOMBESIN"/>
    <property type="match status" value="1"/>
</dbReference>
<keyword id="KW-0027">Amidation</keyword>
<keyword id="KW-0968">Cytoplasmic vesicle</keyword>
<keyword id="KW-0903">Direct protein sequencing</keyword>
<keyword id="KW-0964">Secreted</keyword>
<comment type="function">
    <text evidence="2">Stimulates the release of gastrin and other gastrointestinal hormones.</text>
</comment>
<comment type="subcellular location">
    <subcellularLocation>
        <location evidence="1">Secreted</location>
    </subcellularLocation>
    <subcellularLocation>
        <location evidence="3">Cytoplasmic vesicle</location>
        <location evidence="3">Secretory vesicle lumen</location>
    </subcellularLocation>
</comment>
<comment type="similarity">
    <text evidence="5">Belongs to the bombesin/neuromedin-B/ranatensin family.</text>
</comment>
<evidence type="ECO:0000250" key="1">
    <source>
        <dbReference type="UniProtKB" id="P07492"/>
    </source>
</evidence>
<evidence type="ECO:0000250" key="2">
    <source>
        <dbReference type="UniProtKB" id="P63153"/>
    </source>
</evidence>
<evidence type="ECO:0000250" key="3">
    <source>
        <dbReference type="UniProtKB" id="Q863C3"/>
    </source>
</evidence>
<evidence type="ECO:0000269" key="4">
    <source>
    </source>
</evidence>
<evidence type="ECO:0000305" key="5"/>
<sequence>APAPSGGGSAPLAKIYPRGSHWAVGHLM</sequence>
<reference key="1">
    <citation type="journal article" date="1993" name="Peptides">
        <title>Neuroendocrine peptides (NPY, GRP, VIP, somatostatin) from the brain and stomach of the alligator.</title>
        <authorList>
            <person name="Wang Y."/>
            <person name="Conlon J.M."/>
        </authorList>
    </citation>
    <scope>PROTEIN SEQUENCE</scope>
    <scope>AMIDATION AT MET-28</scope>
    <source>
        <tissue>Stomach</tissue>
    </source>
</reference>
<accession>P31886</accession>
<feature type="peptide" id="PRO_0000045916" description="Gastrin-releasing peptide" evidence="4">
    <location>
        <begin position="1"/>
        <end position="28"/>
    </location>
</feature>
<feature type="peptide" id="PRO_0000003046" description="Neuromedin-C" evidence="4">
    <location>
        <begin position="19"/>
        <end position="28"/>
    </location>
</feature>
<feature type="modified residue" description="Methionine amide" evidence="4">
    <location>
        <position position="28"/>
    </location>
</feature>
<protein>
    <recommendedName>
        <fullName>Gastrin-releasing peptide</fullName>
        <shortName>GRP</shortName>
    </recommendedName>
    <component>
        <recommendedName>
            <fullName>Neuromedin-C</fullName>
        </recommendedName>
        <alternativeName>
            <fullName>GRP-10</fullName>
        </alternativeName>
    </component>
</protein>
<organism>
    <name type="scientific">Alligator mississippiensis</name>
    <name type="common">American alligator</name>
    <dbReference type="NCBI Taxonomy" id="8496"/>
    <lineage>
        <taxon>Eukaryota</taxon>
        <taxon>Metazoa</taxon>
        <taxon>Chordata</taxon>
        <taxon>Craniata</taxon>
        <taxon>Vertebrata</taxon>
        <taxon>Euteleostomi</taxon>
        <taxon>Archelosauria</taxon>
        <taxon>Archosauria</taxon>
        <taxon>Crocodylia</taxon>
        <taxon>Alligatoridae</taxon>
        <taxon>Alligatorinae</taxon>
        <taxon>Alligator</taxon>
    </lineage>
</organism>
<gene>
    <name type="primary">GRP</name>
</gene>